<gene>
    <name type="ordered locus">lmo2223</name>
</gene>
<evidence type="ECO:0000255" key="1">
    <source>
        <dbReference type="HAMAP-Rule" id="MF_01526"/>
    </source>
</evidence>
<keyword id="KW-1185">Reference proteome</keyword>
<protein>
    <recommendedName>
        <fullName evidence="1">UPF0342 protein lmo2223</fullName>
    </recommendedName>
</protein>
<reference key="1">
    <citation type="journal article" date="2001" name="Science">
        <title>Comparative genomics of Listeria species.</title>
        <authorList>
            <person name="Glaser P."/>
            <person name="Frangeul L."/>
            <person name="Buchrieser C."/>
            <person name="Rusniok C."/>
            <person name="Amend A."/>
            <person name="Baquero F."/>
            <person name="Berche P."/>
            <person name="Bloecker H."/>
            <person name="Brandt P."/>
            <person name="Chakraborty T."/>
            <person name="Charbit A."/>
            <person name="Chetouani F."/>
            <person name="Couve E."/>
            <person name="de Daruvar A."/>
            <person name="Dehoux P."/>
            <person name="Domann E."/>
            <person name="Dominguez-Bernal G."/>
            <person name="Duchaud E."/>
            <person name="Durant L."/>
            <person name="Dussurget O."/>
            <person name="Entian K.-D."/>
            <person name="Fsihi H."/>
            <person name="Garcia-del Portillo F."/>
            <person name="Garrido P."/>
            <person name="Gautier L."/>
            <person name="Goebel W."/>
            <person name="Gomez-Lopez N."/>
            <person name="Hain T."/>
            <person name="Hauf J."/>
            <person name="Jackson D."/>
            <person name="Jones L.-M."/>
            <person name="Kaerst U."/>
            <person name="Kreft J."/>
            <person name="Kuhn M."/>
            <person name="Kunst F."/>
            <person name="Kurapkat G."/>
            <person name="Madueno E."/>
            <person name="Maitournam A."/>
            <person name="Mata Vicente J."/>
            <person name="Ng E."/>
            <person name="Nedjari H."/>
            <person name="Nordsiek G."/>
            <person name="Novella S."/>
            <person name="de Pablos B."/>
            <person name="Perez-Diaz J.-C."/>
            <person name="Purcell R."/>
            <person name="Remmel B."/>
            <person name="Rose M."/>
            <person name="Schlueter T."/>
            <person name="Simoes N."/>
            <person name="Tierrez A."/>
            <person name="Vazquez-Boland J.-A."/>
            <person name="Voss H."/>
            <person name="Wehland J."/>
            <person name="Cossart P."/>
        </authorList>
    </citation>
    <scope>NUCLEOTIDE SEQUENCE [LARGE SCALE GENOMIC DNA]</scope>
    <source>
        <strain>ATCC BAA-679 / EGD-e</strain>
    </source>
</reference>
<name>Y2223_LISMO</name>
<accession>Q8Y553</accession>
<sequence>MAVNIYDLAHDLDKGIRETPEFISLQDAYREVNENADAKAKFERFRDVQVTIQEKQMTGQEIDDETVDVAQQVAQEVQENELIVKLMEKEQAMSTIINDLNRIIMTPLQDLYNVAND</sequence>
<feature type="chain" id="PRO_0000109981" description="UPF0342 protein lmo2223">
    <location>
        <begin position="1"/>
        <end position="117"/>
    </location>
</feature>
<organism>
    <name type="scientific">Listeria monocytogenes serovar 1/2a (strain ATCC BAA-679 / EGD-e)</name>
    <dbReference type="NCBI Taxonomy" id="169963"/>
    <lineage>
        <taxon>Bacteria</taxon>
        <taxon>Bacillati</taxon>
        <taxon>Bacillota</taxon>
        <taxon>Bacilli</taxon>
        <taxon>Bacillales</taxon>
        <taxon>Listeriaceae</taxon>
        <taxon>Listeria</taxon>
    </lineage>
</organism>
<dbReference type="EMBL" id="AL591982">
    <property type="protein sequence ID" value="CAD00301.1"/>
    <property type="molecule type" value="Genomic_DNA"/>
</dbReference>
<dbReference type="PIR" id="AG1352">
    <property type="entry name" value="AG1352"/>
</dbReference>
<dbReference type="RefSeq" id="NP_465747.1">
    <property type="nucleotide sequence ID" value="NC_003210.1"/>
</dbReference>
<dbReference type="RefSeq" id="WP_003723354.1">
    <property type="nucleotide sequence ID" value="NZ_CP149495.1"/>
</dbReference>
<dbReference type="SMR" id="Q8Y553"/>
<dbReference type="STRING" id="169963.gene:17594914"/>
<dbReference type="PaxDb" id="169963-lmo2223"/>
<dbReference type="EnsemblBacteria" id="CAD00301">
    <property type="protein sequence ID" value="CAD00301"/>
    <property type="gene ID" value="CAD00301"/>
</dbReference>
<dbReference type="GeneID" id="987403"/>
<dbReference type="KEGG" id="lmo:lmo2223"/>
<dbReference type="PATRIC" id="fig|169963.11.peg.2275"/>
<dbReference type="eggNOG" id="COG3679">
    <property type="taxonomic scope" value="Bacteria"/>
</dbReference>
<dbReference type="HOGENOM" id="CLU_140243_3_0_9"/>
<dbReference type="OrthoDB" id="9811402at2"/>
<dbReference type="PhylomeDB" id="Q8Y553"/>
<dbReference type="BioCyc" id="LMON169963:LMO2223-MONOMER"/>
<dbReference type="Proteomes" id="UP000000817">
    <property type="component" value="Chromosome"/>
</dbReference>
<dbReference type="Gene3D" id="1.20.1500.10">
    <property type="entry name" value="YheA/YmcA-like"/>
    <property type="match status" value="1"/>
</dbReference>
<dbReference type="HAMAP" id="MF_01526">
    <property type="entry name" value="UPF0342"/>
    <property type="match status" value="1"/>
</dbReference>
<dbReference type="InterPro" id="IPR010368">
    <property type="entry name" value="Com_YlbF"/>
</dbReference>
<dbReference type="InterPro" id="IPR023378">
    <property type="entry name" value="YheA/YmcA-like_dom_sf"/>
</dbReference>
<dbReference type="NCBIfam" id="NF010210">
    <property type="entry name" value="PRK13676.1-2"/>
    <property type="match status" value="1"/>
</dbReference>
<dbReference type="Pfam" id="PF06133">
    <property type="entry name" value="Com_YlbF"/>
    <property type="match status" value="1"/>
</dbReference>
<dbReference type="SUPFAM" id="SSF158622">
    <property type="entry name" value="YheA/YmcA-like"/>
    <property type="match status" value="1"/>
</dbReference>
<proteinExistence type="inferred from homology"/>
<comment type="similarity">
    <text evidence="1">Belongs to the UPF0342 family.</text>
</comment>